<protein>
    <recommendedName>
        <fullName evidence="5">Large ribosomal subunit protein eL32</fullName>
    </recommendedName>
    <alternativeName>
        <fullName>50S ribosomal protein L32e</fullName>
    </alternativeName>
    <alternativeName>
        <fullName>Hl5</fullName>
    </alternativeName>
</protein>
<proteinExistence type="evidence at protein level"/>
<keyword id="KW-0002">3D-structure</keyword>
<keyword id="KW-0903">Direct protein sequencing</keyword>
<keyword id="KW-1185">Reference proteome</keyword>
<keyword id="KW-0687">Ribonucleoprotein</keyword>
<keyword id="KW-0689">Ribosomal protein</keyword>
<keyword id="KW-0694">RNA-binding</keyword>
<keyword id="KW-0699">rRNA-binding</keyword>
<organism>
    <name type="scientific">Haloarcula marismortui (strain ATCC 43049 / DSM 3752 / JCM 8966 / VKM B-1809)</name>
    <name type="common">Halobacterium marismortui</name>
    <dbReference type="NCBI Taxonomy" id="272569"/>
    <lineage>
        <taxon>Archaea</taxon>
        <taxon>Methanobacteriati</taxon>
        <taxon>Methanobacteriota</taxon>
        <taxon>Stenosarchaea group</taxon>
        <taxon>Halobacteria</taxon>
        <taxon>Halobacteriales</taxon>
        <taxon>Haloarculaceae</taxon>
        <taxon>Haloarcula</taxon>
    </lineage>
</organism>
<comment type="function">
    <text>Binds to the 23S rRNA.</text>
</comment>
<comment type="subunit">
    <text evidence="2 3">Part of the 50S ribosomal subunit. Interacts weakly with protein L15.</text>
</comment>
<comment type="similarity">
    <text evidence="5">Belongs to the eukaryotic ribosomal protein eL32 family.</text>
</comment>
<gene>
    <name type="primary">rpl32e</name>
    <name type="ordered locus">rrnAC1595</name>
</gene>
<evidence type="ECO:0000256" key="1">
    <source>
        <dbReference type="SAM" id="MobiDB-lite"/>
    </source>
</evidence>
<evidence type="ECO:0000269" key="2">
    <source>
    </source>
</evidence>
<evidence type="ECO:0000269" key="3">
    <source>
    </source>
</evidence>
<evidence type="ECO:0000269" key="4">
    <source>
    </source>
</evidence>
<evidence type="ECO:0000305" key="5"/>
<evidence type="ECO:0007829" key="6">
    <source>
        <dbReference type="PDB" id="1VQ8"/>
    </source>
</evidence>
<evidence type="ECO:0007829" key="7">
    <source>
        <dbReference type="PDB" id="1VQ9"/>
    </source>
</evidence>
<evidence type="ECO:0007829" key="8">
    <source>
        <dbReference type="PDB" id="2QA4"/>
    </source>
</evidence>
<feature type="initiator methionine" description="Removed" evidence="4">
    <location>
        <position position="1"/>
    </location>
</feature>
<feature type="chain" id="PRO_0000131148" description="Large ribosomal subunit protein eL32">
    <location>
        <begin position="2"/>
        <end position="241"/>
    </location>
</feature>
<feature type="region of interest" description="Disordered" evidence="1">
    <location>
        <begin position="1"/>
        <end position="47"/>
    </location>
</feature>
<feature type="region of interest" description="Disordered" evidence="1">
    <location>
        <begin position="68"/>
        <end position="182"/>
    </location>
</feature>
<feature type="compositionally biased region" description="Acidic residues" evidence="1">
    <location>
        <begin position="1"/>
        <end position="16"/>
    </location>
</feature>
<feature type="compositionally biased region" description="Basic and acidic residues" evidence="1">
    <location>
        <begin position="29"/>
        <end position="44"/>
    </location>
</feature>
<feature type="compositionally biased region" description="Acidic residues" evidence="1">
    <location>
        <begin position="73"/>
        <end position="96"/>
    </location>
</feature>
<feature type="compositionally biased region" description="Basic and acidic residues" evidence="1">
    <location>
        <begin position="103"/>
        <end position="116"/>
    </location>
</feature>
<feature type="compositionally biased region" description="Basic residues" evidence="1">
    <location>
        <begin position="133"/>
        <end position="159"/>
    </location>
</feature>
<feature type="sequence conflict" description="In Ref. 3; AA sequence." evidence="5" ref="3">
    <original>S</original>
    <variation>R</variation>
    <location>
        <position position="26"/>
    </location>
</feature>
<feature type="sequence conflict" description="In Ref. 3; AA sequence." evidence="5" ref="3">
    <location>
        <position position="31"/>
    </location>
</feature>
<feature type="sequence conflict" description="In Ref. 3; AA sequence." evidence="5" ref="3">
    <original>LS</original>
    <variation>SL</variation>
    <location>
        <begin position="110"/>
        <end position="111"/>
    </location>
</feature>
<feature type="strand" evidence="6">
    <location>
        <begin position="97"/>
        <end position="100"/>
    </location>
</feature>
<feature type="helix" evidence="6">
    <location>
        <begin position="112"/>
        <end position="124"/>
    </location>
</feature>
<feature type="helix" evidence="6">
    <location>
        <begin position="134"/>
        <end position="136"/>
    </location>
</feature>
<feature type="strand" evidence="8">
    <location>
        <begin position="138"/>
        <end position="140"/>
    </location>
</feature>
<feature type="turn" evidence="6">
    <location>
        <begin position="153"/>
        <end position="157"/>
    </location>
</feature>
<feature type="helix" evidence="6">
    <location>
        <begin position="167"/>
        <end position="169"/>
    </location>
</feature>
<feature type="turn" evidence="6">
    <location>
        <begin position="173"/>
        <end position="177"/>
    </location>
</feature>
<feature type="strand" evidence="6">
    <location>
        <begin position="184"/>
        <end position="190"/>
    </location>
</feature>
<feature type="helix" evidence="6">
    <location>
        <begin position="191"/>
        <end position="194"/>
    </location>
</feature>
<feature type="turn" evidence="6">
    <location>
        <begin position="199"/>
        <end position="201"/>
    </location>
</feature>
<feature type="strand" evidence="6">
    <location>
        <begin position="202"/>
        <end position="206"/>
    </location>
</feature>
<feature type="strand" evidence="7">
    <location>
        <begin position="208"/>
        <end position="210"/>
    </location>
</feature>
<feature type="helix" evidence="6">
    <location>
        <begin position="212"/>
        <end position="224"/>
    </location>
</feature>
<feature type="strand" evidence="6">
    <location>
        <begin position="229"/>
        <end position="231"/>
    </location>
</feature>
<feature type="strand" evidence="6">
    <location>
        <begin position="234"/>
        <end position="237"/>
    </location>
</feature>
<dbReference type="EMBL" id="X58395">
    <property type="protein sequence ID" value="CAA41288.1"/>
    <property type="molecule type" value="Genomic_DNA"/>
</dbReference>
<dbReference type="EMBL" id="AY596297">
    <property type="protein sequence ID" value="AAV46513.1"/>
    <property type="molecule type" value="Genomic_DNA"/>
</dbReference>
<dbReference type="PIR" id="S16539">
    <property type="entry name" value="R7HSH5"/>
</dbReference>
<dbReference type="RefSeq" id="WP_011223739.1">
    <property type="nucleotide sequence ID" value="NC_006396.1"/>
</dbReference>
<dbReference type="PDB" id="1FFK">
    <property type="method" value="X-ray"/>
    <property type="resolution" value="2.40 A"/>
    <property type="chains" value="V=99-241"/>
</dbReference>
<dbReference type="PDB" id="1JJ2">
    <property type="method" value="X-ray"/>
    <property type="resolution" value="2.40 A"/>
    <property type="chains" value="X=2-241"/>
</dbReference>
<dbReference type="PDB" id="1K73">
    <property type="method" value="X-ray"/>
    <property type="resolution" value="3.01 A"/>
    <property type="chains" value="Z=2-241"/>
</dbReference>
<dbReference type="PDB" id="1K8A">
    <property type="method" value="X-ray"/>
    <property type="resolution" value="3.00 A"/>
    <property type="chains" value="Z=2-241"/>
</dbReference>
<dbReference type="PDB" id="1K9M">
    <property type="method" value="X-ray"/>
    <property type="resolution" value="3.00 A"/>
    <property type="chains" value="Z=2-241"/>
</dbReference>
<dbReference type="PDB" id="1KC8">
    <property type="method" value="X-ray"/>
    <property type="resolution" value="3.01 A"/>
    <property type="chains" value="Z=2-241"/>
</dbReference>
<dbReference type="PDB" id="1KD1">
    <property type="method" value="X-ray"/>
    <property type="resolution" value="3.00 A"/>
    <property type="chains" value="Z=2-241"/>
</dbReference>
<dbReference type="PDB" id="1KQS">
    <property type="method" value="X-ray"/>
    <property type="resolution" value="3.10 A"/>
    <property type="chains" value="X=2-241"/>
</dbReference>
<dbReference type="PDB" id="1M1K">
    <property type="method" value="X-ray"/>
    <property type="resolution" value="3.20 A"/>
    <property type="chains" value="Z=2-241"/>
</dbReference>
<dbReference type="PDB" id="1M90">
    <property type="method" value="X-ray"/>
    <property type="resolution" value="2.80 A"/>
    <property type="chains" value="Z=2-241"/>
</dbReference>
<dbReference type="PDB" id="1N8R">
    <property type="method" value="X-ray"/>
    <property type="resolution" value="3.00 A"/>
    <property type="chains" value="Z=2-241"/>
</dbReference>
<dbReference type="PDB" id="1NJI">
    <property type="method" value="X-ray"/>
    <property type="resolution" value="3.00 A"/>
    <property type="chains" value="Z=2-241"/>
</dbReference>
<dbReference type="PDB" id="1Q7Y">
    <property type="method" value="X-ray"/>
    <property type="resolution" value="3.20 A"/>
    <property type="chains" value="Z=2-241"/>
</dbReference>
<dbReference type="PDB" id="1Q81">
    <property type="method" value="X-ray"/>
    <property type="resolution" value="2.95 A"/>
    <property type="chains" value="Z=2-241"/>
</dbReference>
<dbReference type="PDB" id="1Q82">
    <property type="method" value="X-ray"/>
    <property type="resolution" value="2.98 A"/>
    <property type="chains" value="Z=2-241"/>
</dbReference>
<dbReference type="PDB" id="1Q86">
    <property type="method" value="X-ray"/>
    <property type="resolution" value="3.00 A"/>
    <property type="chains" value="Z=2-241"/>
</dbReference>
<dbReference type="PDB" id="1QVF">
    <property type="method" value="X-ray"/>
    <property type="resolution" value="3.10 A"/>
    <property type="chains" value="X=2-241"/>
</dbReference>
<dbReference type="PDB" id="1QVG">
    <property type="method" value="X-ray"/>
    <property type="resolution" value="2.90 A"/>
    <property type="chains" value="X=2-241"/>
</dbReference>
<dbReference type="PDB" id="1S72">
    <property type="method" value="X-ray"/>
    <property type="resolution" value="2.40 A"/>
    <property type="chains" value="Y=1-241"/>
</dbReference>
<dbReference type="PDB" id="1VQ4">
    <property type="method" value="X-ray"/>
    <property type="resolution" value="2.70 A"/>
    <property type="chains" value="Y=1-241"/>
</dbReference>
<dbReference type="PDB" id="1VQ5">
    <property type="method" value="X-ray"/>
    <property type="resolution" value="2.60 A"/>
    <property type="chains" value="Y=1-241"/>
</dbReference>
<dbReference type="PDB" id="1VQ6">
    <property type="method" value="X-ray"/>
    <property type="resolution" value="2.70 A"/>
    <property type="chains" value="Y=1-241"/>
</dbReference>
<dbReference type="PDB" id="1VQ7">
    <property type="method" value="X-ray"/>
    <property type="resolution" value="2.50 A"/>
    <property type="chains" value="Y=1-241"/>
</dbReference>
<dbReference type="PDB" id="1VQ8">
    <property type="method" value="X-ray"/>
    <property type="resolution" value="2.20 A"/>
    <property type="chains" value="Y=1-241"/>
</dbReference>
<dbReference type="PDB" id="1VQ9">
    <property type="method" value="X-ray"/>
    <property type="resolution" value="2.40 A"/>
    <property type="chains" value="Y=1-241"/>
</dbReference>
<dbReference type="PDB" id="1VQK">
    <property type="method" value="X-ray"/>
    <property type="resolution" value="2.30 A"/>
    <property type="chains" value="Y=1-241"/>
</dbReference>
<dbReference type="PDB" id="1VQL">
    <property type="method" value="X-ray"/>
    <property type="resolution" value="2.30 A"/>
    <property type="chains" value="Y=1-241"/>
</dbReference>
<dbReference type="PDB" id="1VQM">
    <property type="method" value="X-ray"/>
    <property type="resolution" value="2.30 A"/>
    <property type="chains" value="Y=1-241"/>
</dbReference>
<dbReference type="PDB" id="1VQN">
    <property type="method" value="X-ray"/>
    <property type="resolution" value="2.40 A"/>
    <property type="chains" value="Y=1-241"/>
</dbReference>
<dbReference type="PDB" id="1VQO">
    <property type="method" value="X-ray"/>
    <property type="resolution" value="2.20 A"/>
    <property type="chains" value="Y=1-241"/>
</dbReference>
<dbReference type="PDB" id="1VQP">
    <property type="method" value="X-ray"/>
    <property type="resolution" value="2.25 A"/>
    <property type="chains" value="Y=1-241"/>
</dbReference>
<dbReference type="PDB" id="1W2B">
    <property type="method" value="X-ray"/>
    <property type="resolution" value="3.50 A"/>
    <property type="chains" value="X=2-241"/>
</dbReference>
<dbReference type="PDB" id="1YHQ">
    <property type="method" value="X-ray"/>
    <property type="resolution" value="2.40 A"/>
    <property type="chains" value="Y=1-241"/>
</dbReference>
<dbReference type="PDB" id="1YI2">
    <property type="method" value="X-ray"/>
    <property type="resolution" value="2.65 A"/>
    <property type="chains" value="Y=1-241"/>
</dbReference>
<dbReference type="PDB" id="1YIJ">
    <property type="method" value="X-ray"/>
    <property type="resolution" value="2.60 A"/>
    <property type="chains" value="Y=1-241"/>
</dbReference>
<dbReference type="PDB" id="1YIT">
    <property type="method" value="X-ray"/>
    <property type="resolution" value="2.80 A"/>
    <property type="chains" value="Y=1-241"/>
</dbReference>
<dbReference type="PDB" id="1YJ9">
    <property type="method" value="X-ray"/>
    <property type="resolution" value="2.90 A"/>
    <property type="chains" value="Y=1-241"/>
</dbReference>
<dbReference type="PDB" id="1YJN">
    <property type="method" value="X-ray"/>
    <property type="resolution" value="3.00 A"/>
    <property type="chains" value="Y=1-241"/>
</dbReference>
<dbReference type="PDB" id="1YJW">
    <property type="method" value="X-ray"/>
    <property type="resolution" value="2.90 A"/>
    <property type="chains" value="Y=1-241"/>
</dbReference>
<dbReference type="PDB" id="2OTJ">
    <property type="method" value="X-ray"/>
    <property type="resolution" value="2.90 A"/>
    <property type="chains" value="Y=1-241"/>
</dbReference>
<dbReference type="PDB" id="2OTL">
    <property type="method" value="X-ray"/>
    <property type="resolution" value="2.70 A"/>
    <property type="chains" value="Y=1-241"/>
</dbReference>
<dbReference type="PDB" id="2QA4">
    <property type="method" value="X-ray"/>
    <property type="resolution" value="3.00 A"/>
    <property type="chains" value="Y=1-241"/>
</dbReference>
<dbReference type="PDB" id="2QEX">
    <property type="method" value="X-ray"/>
    <property type="resolution" value="2.90 A"/>
    <property type="chains" value="Y=1-241"/>
</dbReference>
<dbReference type="PDB" id="3CC2">
    <property type="method" value="X-ray"/>
    <property type="resolution" value="2.40 A"/>
    <property type="chains" value="Y=1-241"/>
</dbReference>
<dbReference type="PDB" id="3CC4">
    <property type="method" value="X-ray"/>
    <property type="resolution" value="2.70 A"/>
    <property type="chains" value="Y=1-241"/>
</dbReference>
<dbReference type="PDB" id="3CC7">
    <property type="method" value="X-ray"/>
    <property type="resolution" value="2.70 A"/>
    <property type="chains" value="Y=1-241"/>
</dbReference>
<dbReference type="PDB" id="3CCE">
    <property type="method" value="X-ray"/>
    <property type="resolution" value="2.75 A"/>
    <property type="chains" value="Y=1-241"/>
</dbReference>
<dbReference type="PDB" id="3CCJ">
    <property type="method" value="X-ray"/>
    <property type="resolution" value="2.70 A"/>
    <property type="chains" value="Y=1-241"/>
</dbReference>
<dbReference type="PDB" id="3CCL">
    <property type="method" value="X-ray"/>
    <property type="resolution" value="2.90 A"/>
    <property type="chains" value="Y=1-241"/>
</dbReference>
<dbReference type="PDB" id="3CCM">
    <property type="method" value="X-ray"/>
    <property type="resolution" value="2.55 A"/>
    <property type="chains" value="Y=1-241"/>
</dbReference>
<dbReference type="PDB" id="3CCQ">
    <property type="method" value="X-ray"/>
    <property type="resolution" value="2.90 A"/>
    <property type="chains" value="Y=1-241"/>
</dbReference>
<dbReference type="PDB" id="3CCR">
    <property type="method" value="X-ray"/>
    <property type="resolution" value="3.00 A"/>
    <property type="chains" value="Y=1-241"/>
</dbReference>
<dbReference type="PDB" id="3CCS">
    <property type="method" value="X-ray"/>
    <property type="resolution" value="2.95 A"/>
    <property type="chains" value="Y=1-241"/>
</dbReference>
<dbReference type="PDB" id="3CCU">
    <property type="method" value="X-ray"/>
    <property type="resolution" value="2.80 A"/>
    <property type="chains" value="Y=1-241"/>
</dbReference>
<dbReference type="PDB" id="3CCV">
    <property type="method" value="X-ray"/>
    <property type="resolution" value="2.90 A"/>
    <property type="chains" value="Y=1-241"/>
</dbReference>
<dbReference type="PDB" id="3CD6">
    <property type="method" value="X-ray"/>
    <property type="resolution" value="2.75 A"/>
    <property type="chains" value="Y=1-241"/>
</dbReference>
<dbReference type="PDB" id="3CMA">
    <property type="method" value="X-ray"/>
    <property type="resolution" value="2.80 A"/>
    <property type="chains" value="Y=1-240"/>
</dbReference>
<dbReference type="PDB" id="3CME">
    <property type="method" value="X-ray"/>
    <property type="resolution" value="2.95 A"/>
    <property type="chains" value="Y=1-240"/>
</dbReference>
<dbReference type="PDB" id="3CPW">
    <property type="method" value="X-ray"/>
    <property type="resolution" value="2.70 A"/>
    <property type="chains" value="X=1-241"/>
</dbReference>
<dbReference type="PDB" id="3CXC">
    <property type="method" value="X-ray"/>
    <property type="resolution" value="3.00 A"/>
    <property type="chains" value="X=2-241"/>
</dbReference>
<dbReference type="PDB" id="3G4S">
    <property type="method" value="X-ray"/>
    <property type="resolution" value="3.20 A"/>
    <property type="chains" value="Y=96-237"/>
</dbReference>
<dbReference type="PDB" id="3G6E">
    <property type="method" value="X-ray"/>
    <property type="resolution" value="2.70 A"/>
    <property type="chains" value="Y=96-237"/>
</dbReference>
<dbReference type="PDB" id="3G71">
    <property type="method" value="X-ray"/>
    <property type="resolution" value="2.85 A"/>
    <property type="chains" value="Y=96-237"/>
</dbReference>
<dbReference type="PDB" id="3I55">
    <property type="method" value="X-ray"/>
    <property type="resolution" value="3.11 A"/>
    <property type="chains" value="Y=1-241"/>
</dbReference>
<dbReference type="PDB" id="3I56">
    <property type="method" value="X-ray"/>
    <property type="resolution" value="2.90 A"/>
    <property type="chains" value="Y=1-241"/>
</dbReference>
<dbReference type="PDB" id="3OW2">
    <property type="method" value="X-ray"/>
    <property type="resolution" value="2.70 A"/>
    <property type="chains" value="X=96-237"/>
</dbReference>
<dbReference type="PDB" id="4ADX">
    <property type="method" value="EM"/>
    <property type="resolution" value="6.60 A"/>
    <property type="chains" value="Y=1-241"/>
</dbReference>
<dbReference type="PDB" id="4V9F">
    <property type="method" value="X-ray"/>
    <property type="resolution" value="2.40 A"/>
    <property type="chains" value="Y=1-241"/>
</dbReference>
<dbReference type="PDBsum" id="1FFK"/>
<dbReference type="PDBsum" id="1JJ2"/>
<dbReference type="PDBsum" id="1K73"/>
<dbReference type="PDBsum" id="1K8A"/>
<dbReference type="PDBsum" id="1K9M"/>
<dbReference type="PDBsum" id="1KC8"/>
<dbReference type="PDBsum" id="1KD1"/>
<dbReference type="PDBsum" id="1KQS"/>
<dbReference type="PDBsum" id="1M1K"/>
<dbReference type="PDBsum" id="1M90"/>
<dbReference type="PDBsum" id="1N8R"/>
<dbReference type="PDBsum" id="1NJI"/>
<dbReference type="PDBsum" id="1Q7Y"/>
<dbReference type="PDBsum" id="1Q81"/>
<dbReference type="PDBsum" id="1Q82"/>
<dbReference type="PDBsum" id="1Q86"/>
<dbReference type="PDBsum" id="1QVF"/>
<dbReference type="PDBsum" id="1QVG"/>
<dbReference type="PDBsum" id="1S72"/>
<dbReference type="PDBsum" id="1VQ4"/>
<dbReference type="PDBsum" id="1VQ5"/>
<dbReference type="PDBsum" id="1VQ6"/>
<dbReference type="PDBsum" id="1VQ7"/>
<dbReference type="PDBsum" id="1VQ8"/>
<dbReference type="PDBsum" id="1VQ9"/>
<dbReference type="PDBsum" id="1VQK"/>
<dbReference type="PDBsum" id="1VQL"/>
<dbReference type="PDBsum" id="1VQM"/>
<dbReference type="PDBsum" id="1VQN"/>
<dbReference type="PDBsum" id="1VQO"/>
<dbReference type="PDBsum" id="1VQP"/>
<dbReference type="PDBsum" id="1W2B"/>
<dbReference type="PDBsum" id="1YHQ"/>
<dbReference type="PDBsum" id="1YI2"/>
<dbReference type="PDBsum" id="1YIJ"/>
<dbReference type="PDBsum" id="1YIT"/>
<dbReference type="PDBsum" id="1YJ9"/>
<dbReference type="PDBsum" id="1YJN"/>
<dbReference type="PDBsum" id="1YJW"/>
<dbReference type="PDBsum" id="2OTJ"/>
<dbReference type="PDBsum" id="2OTL"/>
<dbReference type="PDBsum" id="2QA4"/>
<dbReference type="PDBsum" id="2QEX"/>
<dbReference type="PDBsum" id="3CC2"/>
<dbReference type="PDBsum" id="3CC4"/>
<dbReference type="PDBsum" id="3CC7"/>
<dbReference type="PDBsum" id="3CCE"/>
<dbReference type="PDBsum" id="3CCJ"/>
<dbReference type="PDBsum" id="3CCL"/>
<dbReference type="PDBsum" id="3CCM"/>
<dbReference type="PDBsum" id="3CCQ"/>
<dbReference type="PDBsum" id="3CCR"/>
<dbReference type="PDBsum" id="3CCS"/>
<dbReference type="PDBsum" id="3CCU"/>
<dbReference type="PDBsum" id="3CCV"/>
<dbReference type="PDBsum" id="3CD6"/>
<dbReference type="PDBsum" id="3CMA"/>
<dbReference type="PDBsum" id="3CME"/>
<dbReference type="PDBsum" id="3CPW"/>
<dbReference type="PDBsum" id="3CXC"/>
<dbReference type="PDBsum" id="3G4S"/>
<dbReference type="PDBsum" id="3G6E"/>
<dbReference type="PDBsum" id="3G71"/>
<dbReference type="PDBsum" id="3I55"/>
<dbReference type="PDBsum" id="3I56"/>
<dbReference type="PDBsum" id="3OW2"/>
<dbReference type="PDBsum" id="4ADX"/>
<dbReference type="PDBsum" id="4V9F"/>
<dbReference type="SMR" id="P12736"/>
<dbReference type="IntAct" id="P12736">
    <property type="interactions" value="2"/>
</dbReference>
<dbReference type="STRING" id="272569.rrnAC1595"/>
<dbReference type="PaxDb" id="272569-rrnAC1595"/>
<dbReference type="EnsemblBacteria" id="AAV46513">
    <property type="protein sequence ID" value="AAV46513"/>
    <property type="gene ID" value="rrnAC1595"/>
</dbReference>
<dbReference type="GeneID" id="40152560"/>
<dbReference type="KEGG" id="hma:rrnAC1595"/>
<dbReference type="PATRIC" id="fig|272569.17.peg.2284"/>
<dbReference type="eggNOG" id="arCOG00781">
    <property type="taxonomic scope" value="Archaea"/>
</dbReference>
<dbReference type="HOGENOM" id="CLU_071479_0_0_2"/>
<dbReference type="EvolutionaryTrace" id="P12736"/>
<dbReference type="Proteomes" id="UP000001169">
    <property type="component" value="Chromosome I"/>
</dbReference>
<dbReference type="GO" id="GO:0022625">
    <property type="term" value="C:cytosolic large ribosomal subunit"/>
    <property type="evidence" value="ECO:0007669"/>
    <property type="project" value="TreeGrafter"/>
</dbReference>
<dbReference type="GO" id="GO:0003677">
    <property type="term" value="F:DNA binding"/>
    <property type="evidence" value="ECO:0007669"/>
    <property type="project" value="InterPro"/>
</dbReference>
<dbReference type="GO" id="GO:0000166">
    <property type="term" value="F:nucleotide binding"/>
    <property type="evidence" value="ECO:0007669"/>
    <property type="project" value="InterPro"/>
</dbReference>
<dbReference type="GO" id="GO:0019843">
    <property type="term" value="F:rRNA binding"/>
    <property type="evidence" value="ECO:0007669"/>
    <property type="project" value="UniProtKB-KW"/>
</dbReference>
<dbReference type="GO" id="GO:0003735">
    <property type="term" value="F:structural constituent of ribosome"/>
    <property type="evidence" value="ECO:0007669"/>
    <property type="project" value="InterPro"/>
</dbReference>
<dbReference type="GO" id="GO:0006281">
    <property type="term" value="P:DNA repair"/>
    <property type="evidence" value="ECO:0007669"/>
    <property type="project" value="InterPro"/>
</dbReference>
<dbReference type="GO" id="GO:0006412">
    <property type="term" value="P:translation"/>
    <property type="evidence" value="ECO:0007669"/>
    <property type="project" value="UniProtKB-UniRule"/>
</dbReference>
<dbReference type="CDD" id="cd00513">
    <property type="entry name" value="Ribosomal_L32_L32e"/>
    <property type="match status" value="1"/>
</dbReference>
<dbReference type="DisProt" id="DP00944"/>
<dbReference type="Gene3D" id="1.10.150.20">
    <property type="entry name" value="5' to 3' exonuclease, C-terminal subdomain"/>
    <property type="match status" value="1"/>
</dbReference>
<dbReference type="HAMAP" id="MF_00810">
    <property type="entry name" value="Ribosomal_eL32"/>
    <property type="match status" value="1"/>
</dbReference>
<dbReference type="InterPro" id="IPR010995">
    <property type="entry name" value="DNA_repair_Rad51/TF_NusA_a-hlx"/>
</dbReference>
<dbReference type="InterPro" id="IPR003583">
    <property type="entry name" value="Hlx-hairpin-Hlx_DNA-bd_motif"/>
</dbReference>
<dbReference type="InterPro" id="IPR001515">
    <property type="entry name" value="Ribosomal_eL32"/>
</dbReference>
<dbReference type="InterPro" id="IPR023654">
    <property type="entry name" value="Ribosomal_eL32_arc"/>
</dbReference>
<dbReference type="InterPro" id="IPR018263">
    <property type="entry name" value="Ribosomal_eL32_CS"/>
</dbReference>
<dbReference type="InterPro" id="IPR036351">
    <property type="entry name" value="Ribosomal_eL32_sf"/>
</dbReference>
<dbReference type="NCBIfam" id="NF006332">
    <property type="entry name" value="PRK08562.1"/>
    <property type="match status" value="1"/>
</dbReference>
<dbReference type="NCBIfam" id="NF009401">
    <property type="entry name" value="PRK12766.1"/>
    <property type="match status" value="1"/>
</dbReference>
<dbReference type="PANTHER" id="PTHR23413">
    <property type="entry name" value="60S RIBOSOMAL PROTEIN L32 AND DNA-DIRECTED RNA POLYMERASE II, SUBUNIT N"/>
    <property type="match status" value="1"/>
</dbReference>
<dbReference type="PANTHER" id="PTHR23413:SF1">
    <property type="entry name" value="RIBOSOMAL PROTEIN L32"/>
    <property type="match status" value="1"/>
</dbReference>
<dbReference type="Pfam" id="PF14520">
    <property type="entry name" value="HHH_5"/>
    <property type="match status" value="1"/>
</dbReference>
<dbReference type="Pfam" id="PF01655">
    <property type="entry name" value="Ribosomal_L32e"/>
    <property type="match status" value="1"/>
</dbReference>
<dbReference type="SMART" id="SM00278">
    <property type="entry name" value="HhH1"/>
    <property type="match status" value="2"/>
</dbReference>
<dbReference type="SMART" id="SM01393">
    <property type="entry name" value="Ribosomal_L32e"/>
    <property type="match status" value="1"/>
</dbReference>
<dbReference type="SUPFAM" id="SSF47794">
    <property type="entry name" value="Rad51 N-terminal domain-like"/>
    <property type="match status" value="1"/>
</dbReference>
<dbReference type="SUPFAM" id="SSF52042">
    <property type="entry name" value="Ribosomal protein L32e"/>
    <property type="match status" value="1"/>
</dbReference>
<dbReference type="PROSITE" id="PS00580">
    <property type="entry name" value="RIBOSOMAL_L32E"/>
    <property type="match status" value="1"/>
</dbReference>
<reference key="1">
    <citation type="journal article" date="1991" name="Mol. Gen. Genet.">
        <title>Organization and nucleotide sequence of ten ribosomal protein genes from the region equivalent to the spectinomycin operon in the archaebacterium Halobacterium marismortui.</title>
        <authorList>
            <person name="Scholzen T."/>
            <person name="Arndt E."/>
        </authorList>
    </citation>
    <scope>NUCLEOTIDE SEQUENCE [GENOMIC DNA]</scope>
</reference>
<reference key="2">
    <citation type="journal article" date="2004" name="Genome Res.">
        <title>Genome sequence of Haloarcula marismortui: a halophilic archaeon from the Dead Sea.</title>
        <authorList>
            <person name="Baliga N.S."/>
            <person name="Bonneau R."/>
            <person name="Facciotti M.T."/>
            <person name="Pan M."/>
            <person name="Glusman G."/>
            <person name="Deutsch E.W."/>
            <person name="Shannon P."/>
            <person name="Chiu Y."/>
            <person name="Weng R.S."/>
            <person name="Gan R.R."/>
            <person name="Hung P."/>
            <person name="Date S.V."/>
            <person name="Marcotte E."/>
            <person name="Hood L."/>
            <person name="Ng W.V."/>
        </authorList>
    </citation>
    <scope>NUCLEOTIDE SEQUENCE [LARGE SCALE GENOMIC DNA]</scope>
    <source>
        <strain>ATCC 43049 / DSM 3752 / JCM 8966 / VKM B-1809</strain>
    </source>
</reference>
<reference key="3">
    <citation type="journal article" date="1988" name="Biochemistry">
        <title>Extended N-terminal sequencing of proteins of archaebacterial ribosomes blotted from two-dimensional gels onto glass fiber and poly(vinylidene difluoride) membrane.</title>
        <authorList>
            <person name="Walsh M.J."/>
            <person name="McDougall J."/>
            <person name="Wittmann-Liebold B."/>
        </authorList>
    </citation>
    <scope>PROTEIN SEQUENCE OF 2-32 AND 98-113</scope>
</reference>
<reference key="4">
    <citation type="journal article" date="2000" name="Science">
        <title>The complete atomic structure of the large ribosomal subunit at 2.4 A resolution.</title>
        <authorList>
            <person name="Ban N."/>
            <person name="Nissen P."/>
            <person name="Hansen J."/>
            <person name="Moore P.B."/>
            <person name="Steitz T.A."/>
        </authorList>
    </citation>
    <scope>X-RAY CRYSTALLOGRAPHY (2.4 ANGSTROMS) OF 99-241</scope>
    <source>
        <strain>ATCC 43049 / DSM 3752 / JCM 8966 / VKM B-1809</strain>
    </source>
</reference>
<reference key="5">
    <citation type="journal article" date="2000" name="Science">
        <title>The structural basis of ribosome activity in peptide bond synthesis.</title>
        <authorList>
            <person name="Nissen P."/>
            <person name="Hansen J."/>
            <person name="Ban N."/>
            <person name="Moore P.B."/>
            <person name="Steitz T.A."/>
        </authorList>
    </citation>
    <scope>X-RAY CRYSTALLOGRAPHY (3.0 ANGSTROMS) OF THE 50S SUBUNIT</scope>
    <source>
        <strain>ATCC 43049 / DSM 3752 / JCM 8966 / VKM B-1809</strain>
    </source>
</reference>
<reference key="6">
    <citation type="journal article" date="2002" name="Nat. Struct. Biol.">
        <title>A pre-translocational intermediate in protein synthesis observed in crystals of enzymatically active 50S subunits.</title>
        <authorList>
            <person name="Schmeing T.M."/>
            <person name="Seila A.C."/>
            <person name="Hansen J.L."/>
            <person name="Freeborn B."/>
            <person name="Soukup J.K."/>
            <person name="Scaringe S.A."/>
            <person name="Strobel S.A."/>
            <person name="Moore P.B."/>
            <person name="Steitz T.A."/>
        </authorList>
    </citation>
    <scope>X-RAY CRYSTALLOGRAPHY (3.1 ANGSTROMS) OF THE 50S SUBUNIT</scope>
    <source>
        <strain>ATCC 43049 / DSM 3752 / JCM 8966 / VKM B-1809</strain>
    </source>
</reference>
<reference key="7">
    <citation type="journal article" date="2001" name="EMBO J.">
        <title>The kink-turn: a new RNA secondary structure motif.</title>
        <authorList>
            <person name="Klein D.J."/>
            <person name="Schmeing T.M."/>
            <person name="Moore P.B."/>
            <person name="Steitz T.A."/>
        </authorList>
    </citation>
    <scope>X-RAY CRYSTALLOGRAPHY (2.4 ANGSTROMS) OF THE 50S SUBUNIT</scope>
    <source>
        <strain>ATCC 43049 / DSM 3752 / JCM 8966 / VKM B-1809</strain>
    </source>
</reference>
<reference key="8">
    <citation type="journal article" date="2002" name="Mol. Cell">
        <title>The structures of four macrolide antibiotics bound to the large ribosomal subunit.</title>
        <authorList>
            <person name="Hansen J.L."/>
            <person name="Ippolito J.A."/>
            <person name="Ban N."/>
            <person name="Nissen P."/>
            <person name="Moore P.B."/>
            <person name="Steitz T.A."/>
        </authorList>
    </citation>
    <scope>X-RAY CRYSTALLOGRAPHY (3.0 ANGSTROMS) OF THE 50S SUBUNIT IN COMPLEX WITH FOUR MACROLIDE ANTIBIOTICS</scope>
    <source>
        <strain>ATCC 43049 / DSM 3752 / JCM 8966 / VKM B-1809</strain>
    </source>
</reference>
<reference key="9">
    <citation type="journal article" date="2002" name="Proc. Natl. Acad. Sci. U.S.A.">
        <title>Structural insights into peptide bond formation.</title>
        <authorList>
            <person name="Hansen J.L."/>
            <person name="Schmeing T.M."/>
            <person name="Moore P.B."/>
            <person name="Steitz T.A."/>
        </authorList>
    </citation>
    <scope>X-RAY CRYSTALLOGRAPHY (2.8 ANGSTROMS) OF THE 50S SUBUNIT</scope>
    <source>
        <strain>ATCC 43049 / DSM 3752 / JCM 8966 / VKM B-1809</strain>
    </source>
</reference>
<reference key="10">
    <citation type="journal article" date="2003" name="J. Mol. Biol.">
        <title>Structures of five antibiotics bound at the peptidyl transferase center of the large ribosomal subunit.</title>
        <authorList>
            <person name="Hansen J.L."/>
            <person name="Moore P.B."/>
            <person name="Steitz T.A."/>
        </authorList>
    </citation>
    <scope>X-RAY CRYSTALLOGRAPHY (3.0 ANGSTROMS) OF THE 50S SUBUNIT IN COMPLEX WITH FIVE ANTIBIOTICS AT THE PEPTIDYL TRANSFERASE CENTER</scope>
    <source>
        <strain>ATCC 43049 / DSM 3752 / JCM 8966 / VKM B-1809</strain>
    </source>
</reference>
<reference key="11">
    <citation type="journal article" date="2003" name="RNA">
        <title>Structures of deacylated tRNA mimics bound to the E site of the large ribosomal subunit.</title>
        <authorList>
            <person name="Schmeing T.M."/>
            <person name="Moore P.B."/>
            <person name="Steitz T.A."/>
        </authorList>
    </citation>
    <scope>X-RAY CRYSTALLOGRAPHY (2.9 ANGSTROMS) OF THE 50S SUBUNIT WITH TWO DIFFERENT E SITE SUBSTRATES</scope>
</reference>
<reference key="12">
    <citation type="journal article" date="2013" name="Acta Crystallogr. D">
        <title>Revisiting the Haloarcula marismortui 50S ribosomal subunit model.</title>
        <authorList>
            <person name="Gabdulkhakov A."/>
            <person name="Nikonov S."/>
            <person name="Garber M."/>
        </authorList>
    </citation>
    <scope>X-RAY CRYSTALLOGRAPHY (2.4 ANGSTROMS) OF THE 50S SUBUNIT</scope>
</reference>
<accession>P12736</accession>
<accession>Q5V1T9</accession>
<sequence length="241" mass="26416">MADNEEDVEAEEEYTELTDISGVGPSKAESLREAGFESVEDVRGADQSALADVSGIGNALAARIKADVGGLEVESETEAEVEEEGGEEAPDEDVETELQARGLTEKTPDLSDEDARLLTQRHRVGKPQFNRQDHHKKKRVSTSWRKPRGQLSKQRRGIKGKGDTVEAGFRSPTAVRGKHPSGFEEVRVHNVDDLEGVDGDTEAVRIASKVGARKRERIEEEAEDAGIRVLNPTYVEVEVSE</sequence>
<name>RL32_HALMA</name>